<comment type="function">
    <text evidence="1">ATP-dependent specificity component of the Clp protease. It directs the protease to specific substrates. Can perform chaperone functions in the absence of ClpP.</text>
</comment>
<comment type="subunit">
    <text evidence="1">Component of the ClpX-ClpP complex. Forms a hexameric ring that, in the presence of ATP, binds to fourteen ClpP subunits assembled into a disk-like structure with a central cavity, resembling the structure of eukaryotic proteasomes.</text>
</comment>
<comment type="similarity">
    <text evidence="1">Belongs to the ClpX chaperone family.</text>
</comment>
<evidence type="ECO:0000255" key="1">
    <source>
        <dbReference type="HAMAP-Rule" id="MF_00175"/>
    </source>
</evidence>
<evidence type="ECO:0000255" key="2">
    <source>
        <dbReference type="PROSITE-ProRule" id="PRU01250"/>
    </source>
</evidence>
<protein>
    <recommendedName>
        <fullName evidence="1">ATP-dependent Clp protease ATP-binding subunit ClpX</fullName>
    </recommendedName>
</protein>
<reference key="1">
    <citation type="journal article" date="2007" name="J. Bacteriol.">
        <title>Genome of the opportunistic pathogen Streptococcus sanguinis.</title>
        <authorList>
            <person name="Xu P."/>
            <person name="Alves J.M."/>
            <person name="Kitten T."/>
            <person name="Brown A."/>
            <person name="Chen Z."/>
            <person name="Ozaki L.S."/>
            <person name="Manque P."/>
            <person name="Ge X."/>
            <person name="Serrano M.G."/>
            <person name="Puiu D."/>
            <person name="Hendricks S."/>
            <person name="Wang Y."/>
            <person name="Chaplin M.D."/>
            <person name="Akan D."/>
            <person name="Paik S."/>
            <person name="Peterson D.L."/>
            <person name="Macrina F.L."/>
            <person name="Buck G.A."/>
        </authorList>
    </citation>
    <scope>NUCLEOTIDE SEQUENCE [LARGE SCALE GENOMIC DNA]</scope>
    <source>
        <strain>SK36</strain>
    </source>
</reference>
<sequence length="409" mass="45617">MPTSRNDDMMVFCSFCGKNQDEVQKIIAGNNAFICNECVELAQEIIREELAEEVLADLSEVPKPQELLNILNHYVIGQDRAKRALAVAVYNHYKRINYHDSREEEDVELQKSNILMIGPTGSGKTFLAQTLARSLNVPFAIADATALTEAGYVGEDVENILLKLLQAADFNIERAERGIIYVDEIDKIAKKGENVSITRDVSGEGVQQALLKIIEGTVASVPPQGGRKHPQQEMIQVDTKNILFIVGGAFDGIEEIVKQRLGEKIIGFGQNNRAIDEDSSYMQEIISEDVQKFGIIPELIGRLPVFAALEQLTVDDLVRILKEPRNALIKQYQALLSYDDVKLEFDEDALQEIANKAIERKTGARGLRSIIEETMMDVMFEVPSQENVKLVRITKEAVDGTDKPILETA</sequence>
<proteinExistence type="inferred from homology"/>
<keyword id="KW-0067">ATP-binding</keyword>
<keyword id="KW-0143">Chaperone</keyword>
<keyword id="KW-0479">Metal-binding</keyword>
<keyword id="KW-0547">Nucleotide-binding</keyword>
<keyword id="KW-1185">Reference proteome</keyword>
<keyword id="KW-0862">Zinc</keyword>
<feature type="chain" id="PRO_1000024684" description="ATP-dependent Clp protease ATP-binding subunit ClpX">
    <location>
        <begin position="1"/>
        <end position="409"/>
    </location>
</feature>
<feature type="domain" description="ClpX-type ZB" evidence="2">
    <location>
        <begin position="1"/>
        <end position="54"/>
    </location>
</feature>
<feature type="binding site" evidence="2">
    <location>
        <position position="13"/>
    </location>
    <ligand>
        <name>Zn(2+)</name>
        <dbReference type="ChEBI" id="CHEBI:29105"/>
    </ligand>
</feature>
<feature type="binding site" evidence="2">
    <location>
        <position position="16"/>
    </location>
    <ligand>
        <name>Zn(2+)</name>
        <dbReference type="ChEBI" id="CHEBI:29105"/>
    </ligand>
</feature>
<feature type="binding site" evidence="2">
    <location>
        <position position="35"/>
    </location>
    <ligand>
        <name>Zn(2+)</name>
        <dbReference type="ChEBI" id="CHEBI:29105"/>
    </ligand>
</feature>
<feature type="binding site" evidence="2">
    <location>
        <position position="38"/>
    </location>
    <ligand>
        <name>Zn(2+)</name>
        <dbReference type="ChEBI" id="CHEBI:29105"/>
    </ligand>
</feature>
<feature type="binding site" evidence="1">
    <location>
        <begin position="119"/>
        <end position="126"/>
    </location>
    <ligand>
        <name>ATP</name>
        <dbReference type="ChEBI" id="CHEBI:30616"/>
    </ligand>
</feature>
<name>CLPX_STRSV</name>
<dbReference type="EMBL" id="CP000387">
    <property type="protein sequence ID" value="ABN44506.1"/>
    <property type="molecule type" value="Genomic_DNA"/>
</dbReference>
<dbReference type="RefSeq" id="WP_002895582.1">
    <property type="nucleotide sequence ID" value="NZ_CAXTYR010000001.1"/>
</dbReference>
<dbReference type="RefSeq" id="YP_001035056.1">
    <property type="nucleotide sequence ID" value="NC_009009.1"/>
</dbReference>
<dbReference type="SMR" id="A3CMV1"/>
<dbReference type="STRING" id="388919.SSA_1093"/>
<dbReference type="GeneID" id="48425498"/>
<dbReference type="KEGG" id="ssa:SSA_1093"/>
<dbReference type="PATRIC" id="fig|388919.9.peg.1040"/>
<dbReference type="eggNOG" id="COG1219">
    <property type="taxonomic scope" value="Bacteria"/>
</dbReference>
<dbReference type="HOGENOM" id="CLU_014218_8_2_9"/>
<dbReference type="OrthoDB" id="9804062at2"/>
<dbReference type="Proteomes" id="UP000002148">
    <property type="component" value="Chromosome"/>
</dbReference>
<dbReference type="GO" id="GO:0009376">
    <property type="term" value="C:HslUV protease complex"/>
    <property type="evidence" value="ECO:0007669"/>
    <property type="project" value="TreeGrafter"/>
</dbReference>
<dbReference type="GO" id="GO:0005524">
    <property type="term" value="F:ATP binding"/>
    <property type="evidence" value="ECO:0007669"/>
    <property type="project" value="UniProtKB-UniRule"/>
</dbReference>
<dbReference type="GO" id="GO:0016887">
    <property type="term" value="F:ATP hydrolysis activity"/>
    <property type="evidence" value="ECO:0007669"/>
    <property type="project" value="InterPro"/>
</dbReference>
<dbReference type="GO" id="GO:0140662">
    <property type="term" value="F:ATP-dependent protein folding chaperone"/>
    <property type="evidence" value="ECO:0007669"/>
    <property type="project" value="InterPro"/>
</dbReference>
<dbReference type="GO" id="GO:0046983">
    <property type="term" value="F:protein dimerization activity"/>
    <property type="evidence" value="ECO:0007669"/>
    <property type="project" value="InterPro"/>
</dbReference>
<dbReference type="GO" id="GO:0051082">
    <property type="term" value="F:unfolded protein binding"/>
    <property type="evidence" value="ECO:0007669"/>
    <property type="project" value="UniProtKB-UniRule"/>
</dbReference>
<dbReference type="GO" id="GO:0008270">
    <property type="term" value="F:zinc ion binding"/>
    <property type="evidence" value="ECO:0007669"/>
    <property type="project" value="InterPro"/>
</dbReference>
<dbReference type="GO" id="GO:0051301">
    <property type="term" value="P:cell division"/>
    <property type="evidence" value="ECO:0007669"/>
    <property type="project" value="TreeGrafter"/>
</dbReference>
<dbReference type="GO" id="GO:0051603">
    <property type="term" value="P:proteolysis involved in protein catabolic process"/>
    <property type="evidence" value="ECO:0007669"/>
    <property type="project" value="TreeGrafter"/>
</dbReference>
<dbReference type="CDD" id="cd19497">
    <property type="entry name" value="RecA-like_ClpX"/>
    <property type="match status" value="1"/>
</dbReference>
<dbReference type="FunFam" id="1.10.8.60:FF:000002">
    <property type="entry name" value="ATP-dependent Clp protease ATP-binding subunit ClpX"/>
    <property type="match status" value="1"/>
</dbReference>
<dbReference type="FunFam" id="3.40.50.300:FF:000005">
    <property type="entry name" value="ATP-dependent Clp protease ATP-binding subunit ClpX"/>
    <property type="match status" value="1"/>
</dbReference>
<dbReference type="Gene3D" id="1.10.8.60">
    <property type="match status" value="1"/>
</dbReference>
<dbReference type="Gene3D" id="6.20.220.10">
    <property type="entry name" value="ClpX chaperone, C4-type zinc finger domain"/>
    <property type="match status" value="1"/>
</dbReference>
<dbReference type="Gene3D" id="3.40.50.300">
    <property type="entry name" value="P-loop containing nucleotide triphosphate hydrolases"/>
    <property type="match status" value="1"/>
</dbReference>
<dbReference type="HAMAP" id="MF_00175">
    <property type="entry name" value="ClpX"/>
    <property type="match status" value="1"/>
</dbReference>
<dbReference type="InterPro" id="IPR003593">
    <property type="entry name" value="AAA+_ATPase"/>
</dbReference>
<dbReference type="InterPro" id="IPR050052">
    <property type="entry name" value="ATP-dep_Clp_protease_ClpX"/>
</dbReference>
<dbReference type="InterPro" id="IPR003959">
    <property type="entry name" value="ATPase_AAA_core"/>
</dbReference>
<dbReference type="InterPro" id="IPR019489">
    <property type="entry name" value="Clp_ATPase_C"/>
</dbReference>
<dbReference type="InterPro" id="IPR004487">
    <property type="entry name" value="Clp_protease_ATP-bd_su_ClpX"/>
</dbReference>
<dbReference type="InterPro" id="IPR046425">
    <property type="entry name" value="ClpX_bact"/>
</dbReference>
<dbReference type="InterPro" id="IPR027417">
    <property type="entry name" value="P-loop_NTPase"/>
</dbReference>
<dbReference type="InterPro" id="IPR010603">
    <property type="entry name" value="Znf_CppX_C4"/>
</dbReference>
<dbReference type="InterPro" id="IPR038366">
    <property type="entry name" value="Znf_CppX_C4_sf"/>
</dbReference>
<dbReference type="NCBIfam" id="TIGR00382">
    <property type="entry name" value="clpX"/>
    <property type="match status" value="1"/>
</dbReference>
<dbReference type="NCBIfam" id="NF003745">
    <property type="entry name" value="PRK05342.1"/>
    <property type="match status" value="1"/>
</dbReference>
<dbReference type="PANTHER" id="PTHR48102:SF7">
    <property type="entry name" value="ATP-DEPENDENT CLP PROTEASE ATP-BINDING SUBUNIT CLPX-LIKE, MITOCHONDRIAL"/>
    <property type="match status" value="1"/>
</dbReference>
<dbReference type="PANTHER" id="PTHR48102">
    <property type="entry name" value="ATP-DEPENDENT CLP PROTEASE ATP-BINDING SUBUNIT CLPX-LIKE, MITOCHONDRIAL-RELATED"/>
    <property type="match status" value="1"/>
</dbReference>
<dbReference type="Pfam" id="PF07724">
    <property type="entry name" value="AAA_2"/>
    <property type="match status" value="1"/>
</dbReference>
<dbReference type="Pfam" id="PF10431">
    <property type="entry name" value="ClpB_D2-small"/>
    <property type="match status" value="1"/>
</dbReference>
<dbReference type="Pfam" id="PF06689">
    <property type="entry name" value="zf-C4_ClpX"/>
    <property type="match status" value="1"/>
</dbReference>
<dbReference type="SMART" id="SM00382">
    <property type="entry name" value="AAA"/>
    <property type="match status" value="1"/>
</dbReference>
<dbReference type="SMART" id="SM01086">
    <property type="entry name" value="ClpB_D2-small"/>
    <property type="match status" value="1"/>
</dbReference>
<dbReference type="SMART" id="SM00994">
    <property type="entry name" value="zf-C4_ClpX"/>
    <property type="match status" value="1"/>
</dbReference>
<dbReference type="SUPFAM" id="SSF57716">
    <property type="entry name" value="Glucocorticoid receptor-like (DNA-binding domain)"/>
    <property type="match status" value="1"/>
</dbReference>
<dbReference type="SUPFAM" id="SSF52540">
    <property type="entry name" value="P-loop containing nucleoside triphosphate hydrolases"/>
    <property type="match status" value="1"/>
</dbReference>
<dbReference type="PROSITE" id="PS51902">
    <property type="entry name" value="CLPX_ZB"/>
    <property type="match status" value="1"/>
</dbReference>
<gene>
    <name evidence="1" type="primary">clpX</name>
    <name type="ordered locus">SSA_1093</name>
</gene>
<organism>
    <name type="scientific">Streptococcus sanguinis (strain SK36)</name>
    <dbReference type="NCBI Taxonomy" id="388919"/>
    <lineage>
        <taxon>Bacteria</taxon>
        <taxon>Bacillati</taxon>
        <taxon>Bacillota</taxon>
        <taxon>Bacilli</taxon>
        <taxon>Lactobacillales</taxon>
        <taxon>Streptococcaceae</taxon>
        <taxon>Streptococcus</taxon>
    </lineage>
</organism>
<accession>A3CMV1</accession>